<comment type="function">
    <text evidence="1">Participates in the translocation of lipoproteins from the inner membrane to the outer membrane. Only forms a complex with a lipoprotein if the residue after the N-terminal Cys is not an aspartate (The Asp acts as a targeting signal to indicate that the lipoprotein should stay in the inner membrane).</text>
</comment>
<comment type="subunit">
    <text evidence="1">Monomer.</text>
</comment>
<comment type="subcellular location">
    <subcellularLocation>
        <location evidence="1">Periplasm</location>
    </subcellularLocation>
</comment>
<comment type="similarity">
    <text evidence="1">Belongs to the LolA family.</text>
</comment>
<gene>
    <name evidence="1" type="primary">lolA</name>
    <name type="ordered locus">HD_1237</name>
</gene>
<feature type="signal peptide" evidence="1">
    <location>
        <begin position="1"/>
        <end position="23"/>
    </location>
</feature>
<feature type="chain" id="PRO_0000018259" description="Outer-membrane lipoprotein carrier protein">
    <location>
        <begin position="24"/>
        <end position="210"/>
    </location>
</feature>
<keyword id="KW-0143">Chaperone</keyword>
<keyword id="KW-0574">Periplasm</keyword>
<keyword id="KW-0653">Protein transport</keyword>
<keyword id="KW-1185">Reference proteome</keyword>
<keyword id="KW-0732">Signal</keyword>
<keyword id="KW-0813">Transport</keyword>
<accession>Q7VLZ6</accession>
<protein>
    <recommendedName>
        <fullName evidence="1">Outer-membrane lipoprotein carrier protein</fullName>
    </recommendedName>
</protein>
<proteinExistence type="inferred from homology"/>
<reference key="1">
    <citation type="submission" date="2003-06" db="EMBL/GenBank/DDBJ databases">
        <title>The complete genome sequence of Haemophilus ducreyi.</title>
        <authorList>
            <person name="Munson R.S. Jr."/>
            <person name="Ray W.C."/>
            <person name="Mahairas G."/>
            <person name="Sabo P."/>
            <person name="Mungur R."/>
            <person name="Johnson L."/>
            <person name="Nguyen D."/>
            <person name="Wang J."/>
            <person name="Forst C."/>
            <person name="Hood L."/>
        </authorList>
    </citation>
    <scope>NUCLEOTIDE SEQUENCE [LARGE SCALE GENOMIC DNA]</scope>
    <source>
        <strain>35000HP / ATCC 700724</strain>
    </source>
</reference>
<evidence type="ECO:0000255" key="1">
    <source>
        <dbReference type="HAMAP-Rule" id="MF_00240"/>
    </source>
</evidence>
<sequence length="210" mass="24008">MKKRIQKTILTVLFSSLSSIAFADMQSIAELQRRLEHVAQYSADFEQTVRSSKGQQIQSGRGKFQVKRPNLFRMDINAPQENVIVSDGENLWFYDPFVAQVTVNSVQNAVNGTPFVLLTSSDKQHWTQYEVTQNADTFVLKPKSAKNNLRQFDVQIDQNGLLKGFSTIERDGQTNLYRLRNITTADLSADLFKFSVPKDVEVDDQRRVKK</sequence>
<dbReference type="EMBL" id="AE017143">
    <property type="protein sequence ID" value="AAP96073.1"/>
    <property type="molecule type" value="Genomic_DNA"/>
</dbReference>
<dbReference type="RefSeq" id="WP_010945122.1">
    <property type="nucleotide sequence ID" value="NC_002940.2"/>
</dbReference>
<dbReference type="SMR" id="Q7VLZ6"/>
<dbReference type="STRING" id="233412.HD_1237"/>
<dbReference type="KEGG" id="hdu:HD_1237"/>
<dbReference type="eggNOG" id="COG2834">
    <property type="taxonomic scope" value="Bacteria"/>
</dbReference>
<dbReference type="HOGENOM" id="CLU_087560_1_1_6"/>
<dbReference type="OrthoDB" id="9787361at2"/>
<dbReference type="Proteomes" id="UP000001022">
    <property type="component" value="Chromosome"/>
</dbReference>
<dbReference type="GO" id="GO:0030288">
    <property type="term" value="C:outer membrane-bounded periplasmic space"/>
    <property type="evidence" value="ECO:0007669"/>
    <property type="project" value="TreeGrafter"/>
</dbReference>
<dbReference type="GO" id="GO:0044874">
    <property type="term" value="P:lipoprotein localization to outer membrane"/>
    <property type="evidence" value="ECO:0007669"/>
    <property type="project" value="UniProtKB-UniRule"/>
</dbReference>
<dbReference type="GO" id="GO:0042953">
    <property type="term" value="P:lipoprotein transport"/>
    <property type="evidence" value="ECO:0007669"/>
    <property type="project" value="InterPro"/>
</dbReference>
<dbReference type="CDD" id="cd16325">
    <property type="entry name" value="LolA"/>
    <property type="match status" value="1"/>
</dbReference>
<dbReference type="Gene3D" id="2.50.20.10">
    <property type="entry name" value="Lipoprotein localisation LolA/LolB/LppX"/>
    <property type="match status" value="1"/>
</dbReference>
<dbReference type="HAMAP" id="MF_00240">
    <property type="entry name" value="LolA"/>
    <property type="match status" value="1"/>
</dbReference>
<dbReference type="InterPro" id="IPR029046">
    <property type="entry name" value="LolA/LolB/LppX"/>
</dbReference>
<dbReference type="InterPro" id="IPR004564">
    <property type="entry name" value="OM_lipoprot_carrier_LolA-like"/>
</dbReference>
<dbReference type="InterPro" id="IPR018323">
    <property type="entry name" value="OM_lipoprot_carrier_LolA_Pbac"/>
</dbReference>
<dbReference type="NCBIfam" id="TIGR00547">
    <property type="entry name" value="lolA"/>
    <property type="match status" value="1"/>
</dbReference>
<dbReference type="PANTHER" id="PTHR35869">
    <property type="entry name" value="OUTER-MEMBRANE LIPOPROTEIN CARRIER PROTEIN"/>
    <property type="match status" value="1"/>
</dbReference>
<dbReference type="PANTHER" id="PTHR35869:SF1">
    <property type="entry name" value="OUTER-MEMBRANE LIPOPROTEIN CARRIER PROTEIN"/>
    <property type="match status" value="1"/>
</dbReference>
<dbReference type="Pfam" id="PF03548">
    <property type="entry name" value="LolA"/>
    <property type="match status" value="1"/>
</dbReference>
<dbReference type="SUPFAM" id="SSF89392">
    <property type="entry name" value="Prokaryotic lipoproteins and lipoprotein localization factors"/>
    <property type="match status" value="1"/>
</dbReference>
<organism>
    <name type="scientific">Haemophilus ducreyi (strain 35000HP / ATCC 700724)</name>
    <dbReference type="NCBI Taxonomy" id="233412"/>
    <lineage>
        <taxon>Bacteria</taxon>
        <taxon>Pseudomonadati</taxon>
        <taxon>Pseudomonadota</taxon>
        <taxon>Gammaproteobacteria</taxon>
        <taxon>Pasteurellales</taxon>
        <taxon>Pasteurellaceae</taxon>
        <taxon>Haemophilus</taxon>
    </lineage>
</organism>
<name>LOLA_HAEDU</name>